<dbReference type="EMBL" id="JN560697">
    <property type="protein sequence ID" value="AEN25587.1"/>
    <property type="molecule type" value="mRNA"/>
</dbReference>
<dbReference type="EMBL" id="AF051138">
    <property type="protein sequence ID" value="AAF21676.1"/>
    <property type="molecule type" value="mRNA"/>
</dbReference>
<dbReference type="STRING" id="6183.C4QM85"/>
<dbReference type="TCDB" id="2.A.74.1.5">
    <property type="family name" value="the 4 tms multidrug endosomal transporter (met) family"/>
</dbReference>
<dbReference type="EnsemblMetazoa" id="Smp_093840.1">
    <property type="protein sequence ID" value="Smp_093840.1"/>
    <property type="gene ID" value="Smp_093840"/>
</dbReference>
<dbReference type="WBParaSite" id="Smp_093840.1">
    <property type="protein sequence ID" value="Smp_093840.1"/>
    <property type="gene ID" value="Smp_093840"/>
</dbReference>
<dbReference type="HOGENOM" id="CLU_1162417_0_0_1"/>
<dbReference type="InParanoid" id="C4QM85"/>
<dbReference type="OrthoDB" id="10002163at2759"/>
<dbReference type="Proteomes" id="UP000008854">
    <property type="component" value="Unassembled WGS sequence"/>
</dbReference>
<dbReference type="GO" id="GO:0005765">
    <property type="term" value="C:lysosomal membrane"/>
    <property type="evidence" value="ECO:0007669"/>
    <property type="project" value="TreeGrafter"/>
</dbReference>
<dbReference type="GO" id="GO:0005886">
    <property type="term" value="C:plasma membrane"/>
    <property type="evidence" value="ECO:0007669"/>
    <property type="project" value="UniProtKB-SubCell"/>
</dbReference>
<dbReference type="InterPro" id="IPR051115">
    <property type="entry name" value="LAPTM_transporter"/>
</dbReference>
<dbReference type="PANTHER" id="PTHR12479">
    <property type="entry name" value="LYSOSOMAL-ASSOCIATED TRANSMEMBRANE PROTEIN"/>
    <property type="match status" value="1"/>
</dbReference>
<dbReference type="PANTHER" id="PTHR12479:SF10">
    <property type="entry name" value="LYSOSOMAL-ASSOCIATED TRANSMEMBRANE PROTEIN"/>
    <property type="match status" value="1"/>
</dbReference>
<sequence>MPRAPALLTNDARHQFTCCLCLHVRTGTIIFGITQIIIQLVFISFLFLMTFNPRLIPEDNHGNTDPSEDKIRFYVFSTLFRLVPAVSDIHESLTLPSPGTRNVNGNKLYLGHNVESETNFNYDIPPGYKDDVLVDVNNMSPSLVSYTQKNERGSHEVKIKHFSPYIAVCVTTFSLAFCCFMVHGAITKQPTHLLPFFFIQVFDLIICLIHILGFMSSTSDLRLMIHTKTGPIYIKSTGFTFIILSISCMMLAFKAYCLGMVWDCYKYLMLNRRGNLLDDWYSDQWGHLSTFWSLLRAGRNRGNNSIGNSGSPNEPNTRPRPEPITYDPANDLPKYEDILKIPANAYAPPPYYCSNINGNVNTTEASAVTTNTSNSATAANTTTTTTNTGTTTSVISTLTTTNKDDTQINSAPSNAHSSC</sequence>
<reference evidence="10" key="1">
    <citation type="journal article" date="2009" name="Parasitology">
        <title>Schistosoma mansoni TOR is a tetraspanning orphan receptor on the parasite surface.</title>
        <authorList>
            <person name="Lochmatter C."/>
            <person name="Schifferli J.A."/>
            <person name="Martin P.J."/>
        </authorList>
    </citation>
    <scope>NUCLEOTIDE SEQUENCE [GENOMIC DNA / MRNA]</scope>
    <scope>SUBCELLULAR LOCATION</scope>
    <scope>DEVELOPMENTAL STAGE</scope>
    <source>
        <tissue evidence="6">Larva</tissue>
    </source>
</reference>
<reference evidence="10 13" key="2">
    <citation type="journal article" date="1999" name="Biochim. Biophys. Acta">
        <title>Schistosoma TOR (trispanning orphan receptor), a novel, antigenic surface receptor of the blood-dwelling, Schistosoma parasite.</title>
        <authorList>
            <person name="Inal J.M."/>
        </authorList>
    </citation>
    <scope>NUCLEOTIDE SEQUENCE [MRNA] OF 139-419</scope>
    <scope>SUBCELLULAR LOCATION</scope>
    <scope>POTENTIAL USE AS A VACCINE</scope>
</reference>
<reference key="3">
    <citation type="journal article" date="2012" name="Clin. Exp. Immunol.">
        <title>Schistosoma mansoni tetraspanning orphan receptor (SmTOR): a new vaccine candidate against schistosomiasis.</title>
        <authorList>
            <person name="Lochmatter C."/>
            <person name="Schneider C.L."/>
            <person name="Ingram K."/>
            <person name="Keiser J."/>
            <person name="Schifferli J.A."/>
        </authorList>
    </citation>
    <scope>IDENTIFICATION BY MASS SPECTROMETRY</scope>
    <scope>POTENTIAL USE AS A VACCINE</scope>
</reference>
<proteinExistence type="evidence at protein level"/>
<feature type="chain" id="PRO_0000412760" description="Tetraspanning orphan receptor">
    <location>
        <begin position="1"/>
        <end position="419"/>
    </location>
</feature>
<feature type="topological domain" description="Cytoplasmic" evidence="3">
    <location>
        <begin position="1"/>
        <end position="28"/>
    </location>
</feature>
<feature type="transmembrane region" description="Helical" evidence="3">
    <location>
        <begin position="29"/>
        <end position="49"/>
    </location>
</feature>
<feature type="topological domain" description="Extracellular" evidence="3">
    <location>
        <begin position="50"/>
        <end position="165"/>
    </location>
</feature>
<feature type="transmembrane region" description="Helical" evidence="3">
    <location>
        <begin position="166"/>
        <end position="186"/>
    </location>
</feature>
<feature type="topological domain" description="Cytoplasmic" evidence="3">
    <location>
        <begin position="187"/>
        <end position="193"/>
    </location>
</feature>
<feature type="transmembrane region" description="Helical" evidence="3">
    <location>
        <begin position="194"/>
        <end position="214"/>
    </location>
</feature>
<feature type="topological domain" description="Extracellular" evidence="3">
    <location>
        <begin position="215"/>
        <end position="240"/>
    </location>
</feature>
<feature type="transmembrane region" description="Helical" evidence="3">
    <location>
        <begin position="241"/>
        <end position="261"/>
    </location>
</feature>
<feature type="topological domain" description="Cytoplasmic" evidence="3">
    <location>
        <begin position="262"/>
        <end position="419"/>
    </location>
</feature>
<feature type="region of interest" description="Disordered" evidence="4">
    <location>
        <begin position="303"/>
        <end position="328"/>
    </location>
</feature>
<feature type="compositionally biased region" description="Low complexity" evidence="4">
    <location>
        <begin position="303"/>
        <end position="316"/>
    </location>
</feature>
<feature type="sequence conflict" description="In Ref. 2; AAF21676." evidence="10" ref="2">
    <original>C</original>
    <variation>R</variation>
    <location>
        <position position="257"/>
    </location>
</feature>
<feature type="sequence conflict" description="In Ref. 2; AAF21676." evidence="10" ref="2">
    <original>M</original>
    <variation>T</variation>
    <location>
        <position position="260"/>
    </location>
</feature>
<feature type="sequence conflict" description="In Ref. 2; AAF21676." evidence="10" ref="2">
    <original>RG</original>
    <variation>KS</variation>
    <location>
        <begin position="273"/>
        <end position="274"/>
    </location>
</feature>
<feature type="sequence conflict" description="In Ref. 2; AAF21676." evidence="10" ref="2">
    <original>RNRGNNSI</original>
    <variation>PNGSNNPN</variation>
    <location>
        <begin position="299"/>
        <end position="306"/>
    </location>
</feature>
<feature type="sequence conflict" description="In Ref. 2; AAF21676." evidence="10" ref="2">
    <original>P</original>
    <variation>R</variation>
    <location>
        <position position="312"/>
    </location>
</feature>
<feature type="sequence conflict" description="In Ref. 2; AAF21676." evidence="10" ref="2">
    <original>P</original>
    <variation>L</variation>
    <location>
        <position position="319"/>
    </location>
</feature>
<feature type="sequence conflict" description="In Ref. 2; AAF21676." evidence="10" ref="2">
    <original>D</original>
    <variation>G</variation>
    <location>
        <position position="327"/>
    </location>
</feature>
<feature type="sequence conflict" description="In Ref. 2; AAF21676." evidence="10" ref="2">
    <original>A</original>
    <variation>T</variation>
    <location>
        <position position="343"/>
    </location>
</feature>
<feature type="sequence conflict" description="In Ref. 2; AAF21676." evidence="10" ref="2">
    <original>L</original>
    <variation>V</variation>
    <location>
        <position position="398"/>
    </location>
</feature>
<feature type="sequence conflict" description="In Ref. 2; AAF21676." evidence="10" ref="2">
    <original>T</original>
    <variation>I</variation>
    <location>
        <position position="401"/>
    </location>
</feature>
<keyword id="KW-1003">Cell membrane</keyword>
<keyword id="KW-0472">Membrane</keyword>
<keyword id="KW-0597">Phosphoprotein</keyword>
<keyword id="KW-0675">Receptor</keyword>
<keyword id="KW-1185">Reference proteome</keyword>
<keyword id="KW-0812">Transmembrane</keyword>
<keyword id="KW-1133">Transmembrane helix</keyword>
<accession>C4QM85</accession>
<accession>G3LUQ6</accession>
<accession>Q9U597</accession>
<comment type="function">
    <text evidence="1 2">Cell surface receptor that binds to human complement C2a protein. This results in inhibition of the classical and lectin pathways of complement activation, probably due to interference with binding of C2a to C4b and interference with cleavage by C1 or MASP2 such that C3 convertase cannot be formed. This infers resistance to complement-mediated cell lysis, allowing parasite survival and infection (By similarity).</text>
</comment>
<comment type="subunit">
    <text evidence="2">Interacts (via N-terminal extracellular domain) with human C2a.</text>
</comment>
<comment type="subcellular location">
    <subcellularLocation>
        <location evidence="5 6">Cell membrane</location>
        <topology evidence="5 6">Multi-pass membrane protein</topology>
    </subcellularLocation>
    <text evidence="5 6">Located on the surface tegumental plasma membrane, and tegumental surface pits of adult schistosomes so in contact with host blood plasma.</text>
</comment>
<comment type="developmental stage">
    <text evidence="6">Highly expressed in parasitic larvae (cercariae) and at a lower level in eggs, miracidiae, schistosomulae and adults.</text>
</comment>
<comment type="PTM">
    <text evidence="2">Phosphorylated on tyrosine residues.</text>
</comment>
<comment type="biotechnology">
    <text evidence="7 11 12">Potential vaccine candidate molecule (PubMed:10366712, PubMed:23121675). Induces an immune response in mice and confers protection against S.mansoni infection (PubMed:23121675).</text>
</comment>
<name>TOR_SCHMA</name>
<evidence type="ECO:0000250" key="1">
    <source>
        <dbReference type="UniProtKB" id="Q5J7P3"/>
    </source>
</evidence>
<evidence type="ECO:0000250" key="2">
    <source>
        <dbReference type="UniProtKB" id="Q9BLM6"/>
    </source>
</evidence>
<evidence type="ECO:0000255" key="3"/>
<evidence type="ECO:0000256" key="4">
    <source>
        <dbReference type="SAM" id="MobiDB-lite"/>
    </source>
</evidence>
<evidence type="ECO:0000269" key="5">
    <source>
    </source>
</evidence>
<evidence type="ECO:0000269" key="6">
    <source>
    </source>
</evidence>
<evidence type="ECO:0000269" key="7">
    <source>
    </source>
</evidence>
<evidence type="ECO:0000303" key="8">
    <source>
    </source>
</evidence>
<evidence type="ECO:0000303" key="9">
    <source>
    </source>
</evidence>
<evidence type="ECO:0000305" key="10"/>
<evidence type="ECO:0000305" key="11">
    <source>
    </source>
</evidence>
<evidence type="ECO:0000305" key="12">
    <source>
    </source>
</evidence>
<evidence type="ECO:0000312" key="13">
    <source>
        <dbReference type="EMBL" id="AAF21676.1"/>
    </source>
</evidence>
<gene>
    <name evidence="9" type="primary">TOR</name>
    <name type="ORF">Smp_093840</name>
</gene>
<protein>
    <recommendedName>
        <fullName evidence="9">Tetraspanning orphan receptor</fullName>
    </recommendedName>
    <alternativeName>
        <fullName evidence="9">Complement C2 receptor inhibitor tetraspanning</fullName>
    </alternativeName>
    <alternativeName>
        <fullName evidence="8">Complement C2 receptor inhibitor trispanning</fullName>
        <shortName evidence="8">SmCRIT</shortName>
    </alternativeName>
    <alternativeName>
        <fullName>Trispanning orphan receptor</fullName>
        <shortName evidence="8">Sm-TOR</shortName>
    </alternativeName>
</protein>
<organism>
    <name type="scientific">Schistosoma mansoni</name>
    <name type="common">Blood fluke</name>
    <dbReference type="NCBI Taxonomy" id="6183"/>
    <lineage>
        <taxon>Eukaryota</taxon>
        <taxon>Metazoa</taxon>
        <taxon>Spiralia</taxon>
        <taxon>Lophotrochozoa</taxon>
        <taxon>Platyhelminthes</taxon>
        <taxon>Trematoda</taxon>
        <taxon>Digenea</taxon>
        <taxon>Strigeidida</taxon>
        <taxon>Schistosomatoidea</taxon>
        <taxon>Schistosomatidae</taxon>
        <taxon>Schistosoma</taxon>
    </lineage>
</organism>